<organism>
    <name type="scientific">Pectobacterium atrosepticum (strain SCRI 1043 / ATCC BAA-672)</name>
    <name type="common">Erwinia carotovora subsp. atroseptica</name>
    <dbReference type="NCBI Taxonomy" id="218491"/>
    <lineage>
        <taxon>Bacteria</taxon>
        <taxon>Pseudomonadati</taxon>
        <taxon>Pseudomonadota</taxon>
        <taxon>Gammaproteobacteria</taxon>
        <taxon>Enterobacterales</taxon>
        <taxon>Pectobacteriaceae</taxon>
        <taxon>Pectobacterium</taxon>
    </lineage>
</organism>
<comment type="function">
    <text evidence="1">Part of the ABC transporter complex UgpBAEC involved in sn-glycerol-3-phosphate (G3P) import. Probably responsible for the translocation of the substrate across the membrane.</text>
</comment>
<comment type="subunit">
    <text evidence="1">The complex is composed of two ATP-binding proteins (UgpC), two transmembrane proteins (UgpA and UgpE) and a solute-binding protein (UgpB).</text>
</comment>
<comment type="subcellular location">
    <subcellularLocation>
        <location evidence="1">Cell inner membrane</location>
        <topology evidence="2">Multi-pass membrane protein</topology>
    </subcellularLocation>
</comment>
<comment type="similarity">
    <text evidence="4">Belongs to the binding-protein-dependent transport system permease family. UgpAE subfamily.</text>
</comment>
<dbReference type="EMBL" id="BX950851">
    <property type="protein sequence ID" value="CAG77218.1"/>
    <property type="molecule type" value="Genomic_DNA"/>
</dbReference>
<dbReference type="RefSeq" id="WP_011095785.1">
    <property type="nucleotide sequence ID" value="NC_004547.2"/>
</dbReference>
<dbReference type="SMR" id="Q6CZ32"/>
<dbReference type="STRING" id="218491.ECA4321"/>
<dbReference type="GeneID" id="57211015"/>
<dbReference type="KEGG" id="eca:ECA4321"/>
<dbReference type="PATRIC" id="fig|218491.5.peg.4401"/>
<dbReference type="eggNOG" id="COG1175">
    <property type="taxonomic scope" value="Bacteria"/>
</dbReference>
<dbReference type="HOGENOM" id="CLU_016047_0_2_6"/>
<dbReference type="OrthoDB" id="9785347at2"/>
<dbReference type="Proteomes" id="UP000007966">
    <property type="component" value="Chromosome"/>
</dbReference>
<dbReference type="GO" id="GO:0005886">
    <property type="term" value="C:plasma membrane"/>
    <property type="evidence" value="ECO:0007669"/>
    <property type="project" value="UniProtKB-SubCell"/>
</dbReference>
<dbReference type="GO" id="GO:0055085">
    <property type="term" value="P:transmembrane transport"/>
    <property type="evidence" value="ECO:0007669"/>
    <property type="project" value="InterPro"/>
</dbReference>
<dbReference type="CDD" id="cd06261">
    <property type="entry name" value="TM_PBP2"/>
    <property type="match status" value="1"/>
</dbReference>
<dbReference type="FunFam" id="1.10.3720.10:FF:000028">
    <property type="entry name" value="sn-glycerol-3-phosphate ABC transporter permease UgpA"/>
    <property type="match status" value="1"/>
</dbReference>
<dbReference type="Gene3D" id="1.10.3720.10">
    <property type="entry name" value="MetI-like"/>
    <property type="match status" value="1"/>
</dbReference>
<dbReference type="InterPro" id="IPR000515">
    <property type="entry name" value="MetI-like"/>
</dbReference>
<dbReference type="InterPro" id="IPR035906">
    <property type="entry name" value="MetI-like_sf"/>
</dbReference>
<dbReference type="InterPro" id="IPR050809">
    <property type="entry name" value="UgpAE/MalFG_permease"/>
</dbReference>
<dbReference type="NCBIfam" id="NF007852">
    <property type="entry name" value="PRK10561.1"/>
    <property type="match status" value="1"/>
</dbReference>
<dbReference type="PANTHER" id="PTHR43227">
    <property type="entry name" value="BLL4140 PROTEIN"/>
    <property type="match status" value="1"/>
</dbReference>
<dbReference type="PANTHER" id="PTHR43227:SF9">
    <property type="entry name" value="SN-GLYCEROL-3-PHOSPHATE TRANSPORT SYSTEM PERMEASE PROTEIN UGPA"/>
    <property type="match status" value="1"/>
</dbReference>
<dbReference type="Pfam" id="PF00528">
    <property type="entry name" value="BPD_transp_1"/>
    <property type="match status" value="1"/>
</dbReference>
<dbReference type="SUPFAM" id="SSF161098">
    <property type="entry name" value="MetI-like"/>
    <property type="match status" value="1"/>
</dbReference>
<dbReference type="PROSITE" id="PS50928">
    <property type="entry name" value="ABC_TM1"/>
    <property type="match status" value="1"/>
</dbReference>
<proteinExistence type="inferred from homology"/>
<evidence type="ECO:0000250" key="1">
    <source>
        <dbReference type="UniProtKB" id="P10905"/>
    </source>
</evidence>
<evidence type="ECO:0000255" key="2"/>
<evidence type="ECO:0000255" key="3">
    <source>
        <dbReference type="PROSITE-ProRule" id="PRU00441"/>
    </source>
</evidence>
<evidence type="ECO:0000305" key="4"/>
<feature type="chain" id="PRO_0000292826" description="sn-glycerol-3-phosphate transport system permease protein UgpA">
    <location>
        <begin position="1"/>
        <end position="295"/>
    </location>
</feature>
<feature type="topological domain" description="Cytoplasmic" evidence="2">
    <location>
        <begin position="1"/>
        <end position="11"/>
    </location>
</feature>
<feature type="transmembrane region" description="Helical" evidence="3">
    <location>
        <begin position="12"/>
        <end position="32"/>
    </location>
</feature>
<feature type="topological domain" description="Periplasmic" evidence="2">
    <location>
        <begin position="33"/>
        <end position="76"/>
    </location>
</feature>
<feature type="transmembrane region" description="Helical" evidence="3">
    <location>
        <begin position="77"/>
        <end position="97"/>
    </location>
</feature>
<feature type="topological domain" description="Cytoplasmic" evidence="2">
    <location>
        <begin position="98"/>
        <end position="109"/>
    </location>
</feature>
<feature type="transmembrane region" description="Helical" evidence="3">
    <location>
        <begin position="110"/>
        <end position="130"/>
    </location>
</feature>
<feature type="topological domain" description="Periplasmic" evidence="2">
    <location>
        <begin position="131"/>
        <end position="157"/>
    </location>
</feature>
<feature type="transmembrane region" description="Helical" evidence="3">
    <location>
        <begin position="158"/>
        <end position="178"/>
    </location>
</feature>
<feature type="topological domain" description="Cytoplasmic" evidence="2">
    <location>
        <begin position="179"/>
        <end position="207"/>
    </location>
</feature>
<feature type="transmembrane region" description="Helical" evidence="3">
    <location>
        <begin position="208"/>
        <end position="228"/>
    </location>
</feature>
<feature type="topological domain" description="Periplasmic" evidence="2">
    <location>
        <begin position="229"/>
        <end position="262"/>
    </location>
</feature>
<feature type="transmembrane region" description="Helical" evidence="3">
    <location>
        <begin position="263"/>
        <end position="283"/>
    </location>
</feature>
<feature type="topological domain" description="Cytoplasmic" evidence="2">
    <location>
        <begin position="284"/>
        <end position="295"/>
    </location>
</feature>
<feature type="domain" description="ABC transmembrane type-1" evidence="3">
    <location>
        <begin position="76"/>
        <end position="284"/>
    </location>
</feature>
<accession>Q6CZ32</accession>
<gene>
    <name type="primary">ugpA</name>
    <name type="ordered locus">ECA4321</name>
</gene>
<name>UGPA_PECAS</name>
<reference key="1">
    <citation type="journal article" date="2004" name="Proc. Natl. Acad. Sci. U.S.A.">
        <title>Genome sequence of the enterobacterial phytopathogen Erwinia carotovora subsp. atroseptica and characterization of virulence factors.</title>
        <authorList>
            <person name="Bell K.S."/>
            <person name="Sebaihia M."/>
            <person name="Pritchard L."/>
            <person name="Holden M.T.G."/>
            <person name="Hyman L.J."/>
            <person name="Holeva M.C."/>
            <person name="Thomson N.R."/>
            <person name="Bentley S.D."/>
            <person name="Churcher L.J.C."/>
            <person name="Mungall K."/>
            <person name="Atkin R."/>
            <person name="Bason N."/>
            <person name="Brooks K."/>
            <person name="Chillingworth T."/>
            <person name="Clark K."/>
            <person name="Doggett J."/>
            <person name="Fraser A."/>
            <person name="Hance Z."/>
            <person name="Hauser H."/>
            <person name="Jagels K."/>
            <person name="Moule S."/>
            <person name="Norbertczak H."/>
            <person name="Ormond D."/>
            <person name="Price C."/>
            <person name="Quail M.A."/>
            <person name="Sanders M."/>
            <person name="Walker D."/>
            <person name="Whitehead S."/>
            <person name="Salmond G.P.C."/>
            <person name="Birch P.R.J."/>
            <person name="Parkhill J."/>
            <person name="Toth I.K."/>
        </authorList>
    </citation>
    <scope>NUCLEOTIDE SEQUENCE [LARGE SCALE GENOMIC DNA]</scope>
    <source>
        <strain>SCRI 1043 / ATCC BAA-672</strain>
    </source>
</reference>
<sequence length="295" mass="33023">MTSSRPVFRSSWLPYVLVLPQLLITVIFFIWPAGQALWYSVQNLDPFGLSSEFVGMENFRQLFNNPYYLDSFYTTLIFSFLVAGFGMLISLFLAALVDYVIRASRLYQTLIILPYAVAPAVAAVLWMFLFNPGLGLITHFLGLLGYTWNHAQDSGQAMFLVVLASVWKQISYNFLFFLAALQSIPRSLVEAGAIDGAGPVRRFFNLVLPMISPVSFFLLVVNLVYAFFDTFPIIDAATAGGPVQSTTTLIYKIYREGFAGLDLSSSAAQSVILMLLVIGLTVIQFRFVERKVNYQ</sequence>
<keyword id="KW-0997">Cell inner membrane</keyword>
<keyword id="KW-1003">Cell membrane</keyword>
<keyword id="KW-0472">Membrane</keyword>
<keyword id="KW-1185">Reference proteome</keyword>
<keyword id="KW-0812">Transmembrane</keyword>
<keyword id="KW-1133">Transmembrane helix</keyword>
<keyword id="KW-0813">Transport</keyword>
<protein>
    <recommendedName>
        <fullName evidence="1">sn-glycerol-3-phosphate transport system permease protein UgpA</fullName>
    </recommendedName>
</protein>